<organism>
    <name type="scientific">Burkholderia pseudomallei (strain K96243)</name>
    <dbReference type="NCBI Taxonomy" id="272560"/>
    <lineage>
        <taxon>Bacteria</taxon>
        <taxon>Pseudomonadati</taxon>
        <taxon>Pseudomonadota</taxon>
        <taxon>Betaproteobacteria</taxon>
        <taxon>Burkholderiales</taxon>
        <taxon>Burkholderiaceae</taxon>
        <taxon>Burkholderia</taxon>
        <taxon>pseudomallei group</taxon>
    </lineage>
</organism>
<accession>Q63UT6</accession>
<keyword id="KW-0067">ATP-binding</keyword>
<keyword id="KW-0963">Cytoplasm</keyword>
<keyword id="KW-0418">Kinase</keyword>
<keyword id="KW-0460">Magnesium</keyword>
<keyword id="KW-0479">Metal-binding</keyword>
<keyword id="KW-0546">Nucleotide metabolism</keyword>
<keyword id="KW-0547">Nucleotide-binding</keyword>
<keyword id="KW-0597">Phosphoprotein</keyword>
<keyword id="KW-1185">Reference proteome</keyword>
<keyword id="KW-0808">Transferase</keyword>
<gene>
    <name evidence="1" type="primary">ndk</name>
    <name type="ordered locus">BPSL1510</name>
</gene>
<sequence length="141" mass="15562">MALERTLSIIKPDAVAKNVIGQIYSRFENAGLKIVAARMAHLSRADAEKFYAVHAERPFFKDLVDFMISGPVMIQVLEGEDAILKNRDLMGATDPKKAEKGTIRADFADSIDANAVHGSDAPETARAEVAFFFPEMNVYSR</sequence>
<evidence type="ECO:0000255" key="1">
    <source>
        <dbReference type="HAMAP-Rule" id="MF_00451"/>
    </source>
</evidence>
<protein>
    <recommendedName>
        <fullName evidence="1">Nucleoside diphosphate kinase</fullName>
        <shortName evidence="1">NDK</shortName>
        <shortName evidence="1">NDP kinase</shortName>
        <ecNumber evidence="1">2.7.4.6</ecNumber>
    </recommendedName>
    <alternativeName>
        <fullName evidence="1">Nucleoside-2-P kinase</fullName>
    </alternativeName>
</protein>
<name>NDK_BURPS</name>
<proteinExistence type="inferred from homology"/>
<feature type="chain" id="PRO_0000136959" description="Nucleoside diphosphate kinase">
    <location>
        <begin position="1"/>
        <end position="141"/>
    </location>
</feature>
<feature type="active site" description="Pros-phosphohistidine intermediate" evidence="1">
    <location>
        <position position="117"/>
    </location>
</feature>
<feature type="binding site" evidence="1">
    <location>
        <position position="11"/>
    </location>
    <ligand>
        <name>ATP</name>
        <dbReference type="ChEBI" id="CHEBI:30616"/>
    </ligand>
</feature>
<feature type="binding site" evidence="1">
    <location>
        <position position="59"/>
    </location>
    <ligand>
        <name>ATP</name>
        <dbReference type="ChEBI" id="CHEBI:30616"/>
    </ligand>
</feature>
<feature type="binding site" evidence="1">
    <location>
        <position position="87"/>
    </location>
    <ligand>
        <name>ATP</name>
        <dbReference type="ChEBI" id="CHEBI:30616"/>
    </ligand>
</feature>
<feature type="binding site" evidence="1">
    <location>
        <position position="93"/>
    </location>
    <ligand>
        <name>ATP</name>
        <dbReference type="ChEBI" id="CHEBI:30616"/>
    </ligand>
</feature>
<feature type="binding site" evidence="1">
    <location>
        <position position="104"/>
    </location>
    <ligand>
        <name>ATP</name>
        <dbReference type="ChEBI" id="CHEBI:30616"/>
    </ligand>
</feature>
<feature type="binding site" evidence="1">
    <location>
        <position position="114"/>
    </location>
    <ligand>
        <name>ATP</name>
        <dbReference type="ChEBI" id="CHEBI:30616"/>
    </ligand>
</feature>
<comment type="function">
    <text evidence="1">Major role in the synthesis of nucleoside triphosphates other than ATP. The ATP gamma phosphate is transferred to the NDP beta phosphate via a ping-pong mechanism, using a phosphorylated active-site intermediate.</text>
</comment>
<comment type="catalytic activity">
    <reaction evidence="1">
        <text>a 2'-deoxyribonucleoside 5'-diphosphate + ATP = a 2'-deoxyribonucleoside 5'-triphosphate + ADP</text>
        <dbReference type="Rhea" id="RHEA:44640"/>
        <dbReference type="ChEBI" id="CHEBI:30616"/>
        <dbReference type="ChEBI" id="CHEBI:61560"/>
        <dbReference type="ChEBI" id="CHEBI:73316"/>
        <dbReference type="ChEBI" id="CHEBI:456216"/>
        <dbReference type="EC" id="2.7.4.6"/>
    </reaction>
</comment>
<comment type="catalytic activity">
    <reaction evidence="1">
        <text>a ribonucleoside 5'-diphosphate + ATP = a ribonucleoside 5'-triphosphate + ADP</text>
        <dbReference type="Rhea" id="RHEA:18113"/>
        <dbReference type="ChEBI" id="CHEBI:30616"/>
        <dbReference type="ChEBI" id="CHEBI:57930"/>
        <dbReference type="ChEBI" id="CHEBI:61557"/>
        <dbReference type="ChEBI" id="CHEBI:456216"/>
        <dbReference type="EC" id="2.7.4.6"/>
    </reaction>
</comment>
<comment type="cofactor">
    <cofactor evidence="1">
        <name>Mg(2+)</name>
        <dbReference type="ChEBI" id="CHEBI:18420"/>
    </cofactor>
</comment>
<comment type="subunit">
    <text evidence="1">Homotetramer.</text>
</comment>
<comment type="subcellular location">
    <subcellularLocation>
        <location evidence="1">Cytoplasm</location>
    </subcellularLocation>
</comment>
<comment type="similarity">
    <text evidence="1">Belongs to the NDK family.</text>
</comment>
<dbReference type="EC" id="2.7.4.6" evidence="1"/>
<dbReference type="EMBL" id="BX571965">
    <property type="protein sequence ID" value="CAH35511.1"/>
    <property type="molecule type" value="Genomic_DNA"/>
</dbReference>
<dbReference type="RefSeq" id="WP_004193561.1">
    <property type="nucleotide sequence ID" value="NZ_CP009538.1"/>
</dbReference>
<dbReference type="RefSeq" id="YP_108130.1">
    <property type="nucleotide sequence ID" value="NC_006350.1"/>
</dbReference>
<dbReference type="SMR" id="Q63UT6"/>
<dbReference type="STRING" id="272560.BPSL1510"/>
<dbReference type="GeneID" id="92979081"/>
<dbReference type="KEGG" id="bps:BPSL1510"/>
<dbReference type="PATRIC" id="fig|272560.51.peg.3547"/>
<dbReference type="eggNOG" id="COG0105">
    <property type="taxonomic scope" value="Bacteria"/>
</dbReference>
<dbReference type="Proteomes" id="UP000000605">
    <property type="component" value="Chromosome 1"/>
</dbReference>
<dbReference type="GO" id="GO:0005737">
    <property type="term" value="C:cytoplasm"/>
    <property type="evidence" value="ECO:0007669"/>
    <property type="project" value="UniProtKB-SubCell"/>
</dbReference>
<dbReference type="GO" id="GO:0005524">
    <property type="term" value="F:ATP binding"/>
    <property type="evidence" value="ECO:0007669"/>
    <property type="project" value="UniProtKB-UniRule"/>
</dbReference>
<dbReference type="GO" id="GO:0046872">
    <property type="term" value="F:metal ion binding"/>
    <property type="evidence" value="ECO:0007669"/>
    <property type="project" value="UniProtKB-KW"/>
</dbReference>
<dbReference type="GO" id="GO:0004550">
    <property type="term" value="F:nucleoside diphosphate kinase activity"/>
    <property type="evidence" value="ECO:0007669"/>
    <property type="project" value="UniProtKB-UniRule"/>
</dbReference>
<dbReference type="GO" id="GO:0006241">
    <property type="term" value="P:CTP biosynthetic process"/>
    <property type="evidence" value="ECO:0007669"/>
    <property type="project" value="UniProtKB-UniRule"/>
</dbReference>
<dbReference type="GO" id="GO:0006183">
    <property type="term" value="P:GTP biosynthetic process"/>
    <property type="evidence" value="ECO:0007669"/>
    <property type="project" value="UniProtKB-UniRule"/>
</dbReference>
<dbReference type="GO" id="GO:0006228">
    <property type="term" value="P:UTP biosynthetic process"/>
    <property type="evidence" value="ECO:0007669"/>
    <property type="project" value="UniProtKB-UniRule"/>
</dbReference>
<dbReference type="CDD" id="cd04413">
    <property type="entry name" value="NDPk_I"/>
    <property type="match status" value="1"/>
</dbReference>
<dbReference type="FunFam" id="3.30.70.141:FF:000001">
    <property type="entry name" value="Nucleoside diphosphate kinase"/>
    <property type="match status" value="1"/>
</dbReference>
<dbReference type="Gene3D" id="3.30.70.141">
    <property type="entry name" value="Nucleoside diphosphate kinase-like domain"/>
    <property type="match status" value="1"/>
</dbReference>
<dbReference type="HAMAP" id="MF_00451">
    <property type="entry name" value="NDP_kinase"/>
    <property type="match status" value="1"/>
</dbReference>
<dbReference type="InterPro" id="IPR034907">
    <property type="entry name" value="NDK-like_dom"/>
</dbReference>
<dbReference type="InterPro" id="IPR036850">
    <property type="entry name" value="NDK-like_dom_sf"/>
</dbReference>
<dbReference type="InterPro" id="IPR001564">
    <property type="entry name" value="Nucleoside_diP_kinase"/>
</dbReference>
<dbReference type="InterPro" id="IPR023005">
    <property type="entry name" value="Nucleoside_diP_kinase_AS"/>
</dbReference>
<dbReference type="NCBIfam" id="NF001908">
    <property type="entry name" value="PRK00668.1"/>
    <property type="match status" value="1"/>
</dbReference>
<dbReference type="PANTHER" id="PTHR46161">
    <property type="entry name" value="NUCLEOSIDE DIPHOSPHATE KINASE"/>
    <property type="match status" value="1"/>
</dbReference>
<dbReference type="PANTHER" id="PTHR46161:SF3">
    <property type="entry name" value="NUCLEOSIDE DIPHOSPHATE KINASE DDB_G0292928-RELATED"/>
    <property type="match status" value="1"/>
</dbReference>
<dbReference type="Pfam" id="PF00334">
    <property type="entry name" value="NDK"/>
    <property type="match status" value="1"/>
</dbReference>
<dbReference type="PRINTS" id="PR01243">
    <property type="entry name" value="NUCDPKINASE"/>
</dbReference>
<dbReference type="SMART" id="SM00562">
    <property type="entry name" value="NDK"/>
    <property type="match status" value="1"/>
</dbReference>
<dbReference type="SUPFAM" id="SSF54919">
    <property type="entry name" value="Nucleoside diphosphate kinase, NDK"/>
    <property type="match status" value="1"/>
</dbReference>
<dbReference type="PROSITE" id="PS00469">
    <property type="entry name" value="NDPK"/>
    <property type="match status" value="1"/>
</dbReference>
<dbReference type="PROSITE" id="PS51374">
    <property type="entry name" value="NDPK_LIKE"/>
    <property type="match status" value="1"/>
</dbReference>
<reference key="1">
    <citation type="journal article" date="2004" name="Proc. Natl. Acad. Sci. U.S.A.">
        <title>Genomic plasticity of the causative agent of melioidosis, Burkholderia pseudomallei.</title>
        <authorList>
            <person name="Holden M.T.G."/>
            <person name="Titball R.W."/>
            <person name="Peacock S.J."/>
            <person name="Cerdeno-Tarraga A.-M."/>
            <person name="Atkins T."/>
            <person name="Crossman L.C."/>
            <person name="Pitt T."/>
            <person name="Churcher C."/>
            <person name="Mungall K.L."/>
            <person name="Bentley S.D."/>
            <person name="Sebaihia M."/>
            <person name="Thomson N.R."/>
            <person name="Bason N."/>
            <person name="Beacham I.R."/>
            <person name="Brooks K."/>
            <person name="Brown K.A."/>
            <person name="Brown N.F."/>
            <person name="Challis G.L."/>
            <person name="Cherevach I."/>
            <person name="Chillingworth T."/>
            <person name="Cronin A."/>
            <person name="Crossett B."/>
            <person name="Davis P."/>
            <person name="DeShazer D."/>
            <person name="Feltwell T."/>
            <person name="Fraser A."/>
            <person name="Hance Z."/>
            <person name="Hauser H."/>
            <person name="Holroyd S."/>
            <person name="Jagels K."/>
            <person name="Keith K.E."/>
            <person name="Maddison M."/>
            <person name="Moule S."/>
            <person name="Price C."/>
            <person name="Quail M.A."/>
            <person name="Rabbinowitsch E."/>
            <person name="Rutherford K."/>
            <person name="Sanders M."/>
            <person name="Simmonds M."/>
            <person name="Songsivilai S."/>
            <person name="Stevens K."/>
            <person name="Tumapa S."/>
            <person name="Vesaratchavest M."/>
            <person name="Whitehead S."/>
            <person name="Yeats C."/>
            <person name="Barrell B.G."/>
            <person name="Oyston P.C.F."/>
            <person name="Parkhill J."/>
        </authorList>
    </citation>
    <scope>NUCLEOTIDE SEQUENCE [LARGE SCALE GENOMIC DNA]</scope>
    <source>
        <strain>K96243</strain>
    </source>
</reference>